<dbReference type="EC" id="2.1.1.117" evidence="1"/>
<dbReference type="EMBL" id="MH029295">
    <property type="protein sequence ID" value="AWJ64119.1"/>
    <property type="molecule type" value="mRNA"/>
</dbReference>
<dbReference type="SMR" id="A0A2S1WC15"/>
<dbReference type="GO" id="GO:0030777">
    <property type="term" value="F:(S)-scoulerine 9-O-methyltransferase activity"/>
    <property type="evidence" value="ECO:0007669"/>
    <property type="project" value="UniProtKB-EC"/>
</dbReference>
<dbReference type="GO" id="GO:0008171">
    <property type="term" value="F:O-methyltransferase activity"/>
    <property type="evidence" value="ECO:0007669"/>
    <property type="project" value="InterPro"/>
</dbReference>
<dbReference type="GO" id="GO:0046983">
    <property type="term" value="F:protein dimerization activity"/>
    <property type="evidence" value="ECO:0007669"/>
    <property type="project" value="InterPro"/>
</dbReference>
<dbReference type="GO" id="GO:0009820">
    <property type="term" value="P:alkaloid metabolic process"/>
    <property type="evidence" value="ECO:0007669"/>
    <property type="project" value="UniProtKB-KW"/>
</dbReference>
<dbReference type="GO" id="GO:0032259">
    <property type="term" value="P:methylation"/>
    <property type="evidence" value="ECO:0007669"/>
    <property type="project" value="UniProtKB-KW"/>
</dbReference>
<dbReference type="Gene3D" id="3.40.50.150">
    <property type="entry name" value="Vaccinia Virus protein VP39"/>
    <property type="match status" value="1"/>
</dbReference>
<dbReference type="Gene3D" id="1.10.10.10">
    <property type="entry name" value="Winged helix-like DNA-binding domain superfamily/Winged helix DNA-binding domain"/>
    <property type="match status" value="1"/>
</dbReference>
<dbReference type="InterPro" id="IPR016461">
    <property type="entry name" value="COMT-like"/>
</dbReference>
<dbReference type="InterPro" id="IPR001077">
    <property type="entry name" value="O_MeTrfase_dom"/>
</dbReference>
<dbReference type="InterPro" id="IPR012967">
    <property type="entry name" value="Plant_O-MeTrfase_dimerisation"/>
</dbReference>
<dbReference type="InterPro" id="IPR029063">
    <property type="entry name" value="SAM-dependent_MTases_sf"/>
</dbReference>
<dbReference type="InterPro" id="IPR036388">
    <property type="entry name" value="WH-like_DNA-bd_sf"/>
</dbReference>
<dbReference type="InterPro" id="IPR036390">
    <property type="entry name" value="WH_DNA-bd_sf"/>
</dbReference>
<dbReference type="PANTHER" id="PTHR11746">
    <property type="entry name" value="O-METHYLTRANSFERASE"/>
    <property type="match status" value="1"/>
</dbReference>
<dbReference type="Pfam" id="PF08100">
    <property type="entry name" value="Dimerisation"/>
    <property type="match status" value="1"/>
</dbReference>
<dbReference type="Pfam" id="PF00891">
    <property type="entry name" value="Methyltransf_2"/>
    <property type="match status" value="1"/>
</dbReference>
<dbReference type="PIRSF" id="PIRSF005739">
    <property type="entry name" value="O-mtase"/>
    <property type="match status" value="1"/>
</dbReference>
<dbReference type="SUPFAM" id="SSF53335">
    <property type="entry name" value="S-adenosyl-L-methionine-dependent methyltransferases"/>
    <property type="match status" value="1"/>
</dbReference>
<dbReference type="SUPFAM" id="SSF46785">
    <property type="entry name" value="Winged helix' DNA-binding domain"/>
    <property type="match status" value="1"/>
</dbReference>
<dbReference type="PROSITE" id="PS51683">
    <property type="entry name" value="SAM_OMT_II"/>
    <property type="match status" value="1"/>
</dbReference>
<proteinExistence type="evidence at transcript level"/>
<gene>
    <name evidence="5" type="primary">OMT3B</name>
</gene>
<evidence type="ECO:0000250" key="1">
    <source>
        <dbReference type="UniProtKB" id="I3PLQ7"/>
    </source>
</evidence>
<evidence type="ECO:0000250" key="2">
    <source>
        <dbReference type="UniProtKB" id="I3V6A7"/>
    </source>
</evidence>
<evidence type="ECO:0000250" key="3">
    <source>
        <dbReference type="UniProtKB" id="Q5C9L7"/>
    </source>
</evidence>
<evidence type="ECO:0000255" key="4">
    <source>
        <dbReference type="PROSITE-ProRule" id="PRU01020"/>
    </source>
</evidence>
<evidence type="ECO:0000303" key="5">
    <source>
    </source>
</evidence>
<evidence type="ECO:0000305" key="6"/>
<comment type="function">
    <text evidence="1">Methyltransferase involved in the biosynthesis of the benzylisoquinoline alkaloid noscapine (By similarity). Catalyzes the conversion of (S)-scoulerine to (S)-tetrahydrocolumbamine (By similarity).</text>
</comment>
<comment type="catalytic activity">
    <reaction evidence="1">
        <text>(S)-scoulerine + S-adenosyl-L-methionine = (S)-tetrahydrocolumbamine + S-adenosyl-L-homocysteine + H(+)</text>
        <dbReference type="Rhea" id="RHEA:23808"/>
        <dbReference type="ChEBI" id="CHEBI:15378"/>
        <dbReference type="ChEBI" id="CHEBI:17129"/>
        <dbReference type="ChEBI" id="CHEBI:17772"/>
        <dbReference type="ChEBI" id="CHEBI:57856"/>
        <dbReference type="ChEBI" id="CHEBI:59789"/>
        <dbReference type="EC" id="2.1.1.117"/>
    </reaction>
    <physiologicalReaction direction="left-to-right" evidence="1">
        <dbReference type="Rhea" id="RHEA:23809"/>
    </physiologicalReaction>
</comment>
<comment type="pathway">
    <text evidence="6">Alkaloid biosynthesis.</text>
</comment>
<comment type="similarity">
    <text evidence="6">Belongs to the class I-like SAM-binding methyltransferase superfamily. Cation-independent O-methyltransferase family. COMT subfamily.</text>
</comment>
<feature type="chain" id="PRO_0000447595" description="Probable scoulerine-9-O-methyltransferase OMT3B">
    <location>
        <begin position="1"/>
        <end position="339"/>
    </location>
</feature>
<feature type="active site" description="Proton acceptor" evidence="4">
    <location>
        <position position="246"/>
    </location>
</feature>
<feature type="binding site" evidence="3">
    <location>
        <position position="161"/>
    </location>
    <ligand>
        <name>S-adenosyl-L-methionine</name>
        <dbReference type="ChEBI" id="CHEBI:59789"/>
    </ligand>
</feature>
<feature type="binding site" evidence="3">
    <location>
        <position position="164"/>
    </location>
    <ligand>
        <name>substrate</name>
    </ligand>
</feature>
<feature type="binding site" evidence="3">
    <location>
        <position position="165"/>
    </location>
    <ligand>
        <name>S-adenosyl-L-methionine</name>
        <dbReference type="ChEBI" id="CHEBI:59789"/>
    </ligand>
</feature>
<feature type="binding site" evidence="2">
    <location>
        <position position="191"/>
    </location>
    <ligand>
        <name>S-adenosyl-L-methionine</name>
        <dbReference type="ChEBI" id="CHEBI:59789"/>
    </ligand>
</feature>
<feature type="binding site" evidence="4">
    <location>
        <position position="214"/>
    </location>
    <ligand>
        <name>S-adenosyl-L-methionine</name>
        <dbReference type="ChEBI" id="CHEBI:59789"/>
    </ligand>
</feature>
<feature type="binding site" evidence="2">
    <location>
        <begin position="228"/>
        <end position="229"/>
    </location>
    <ligand>
        <name>S-adenosyl-L-methionine</name>
        <dbReference type="ChEBI" id="CHEBI:59789"/>
    </ligand>
</feature>
<feature type="binding site" evidence="2">
    <location>
        <position position="242"/>
    </location>
    <ligand>
        <name>S-adenosyl-L-methionine</name>
        <dbReference type="ChEBI" id="CHEBI:59789"/>
    </ligand>
</feature>
<feature type="binding site" evidence="3">
    <location>
        <begin position="243"/>
        <end position="247"/>
    </location>
    <ligand>
        <name>substrate</name>
    </ligand>
</feature>
<protein>
    <recommendedName>
        <fullName evidence="6">Probable scoulerine-9-O-methyltransferase OMT3B</fullName>
        <ecNumber evidence="1">2.1.1.117</ecNumber>
    </recommendedName>
    <alternativeName>
        <fullName evidence="5">O-methyltransferase 3b</fullName>
        <shortName evidence="5">OMT3b</shortName>
    </alternativeName>
</protein>
<organism>
    <name type="scientific">Papaver somniferum</name>
    <name type="common">Opium poppy</name>
    <dbReference type="NCBI Taxonomy" id="3469"/>
    <lineage>
        <taxon>Eukaryota</taxon>
        <taxon>Viridiplantae</taxon>
        <taxon>Streptophyta</taxon>
        <taxon>Embryophyta</taxon>
        <taxon>Tracheophyta</taxon>
        <taxon>Spermatophyta</taxon>
        <taxon>Magnoliopsida</taxon>
        <taxon>Ranunculales</taxon>
        <taxon>Papaveraceae</taxon>
        <taxon>Papaveroideae</taxon>
        <taxon>Papaver</taxon>
    </lineage>
</organism>
<sequence length="339" mass="37691">MEVVSKIDQENQAKIWKQIFGFAESLVLKCAVQLEIAETLHNNVKPMSLSELASKLPAQPVNEDRLYRILHFLVHMKLFNKDATTQKYSLAPPAKYLLKGWEKSMVPSILSVTDKDFTAPWNHLGDGLTGNCNAFEKALGKGIRVYMRENPEKDQLFNEGMACDTRLFASALVNECKSIFSDGINTLAGVGRGTGTAVKAISKAFPDIKCTIHDLPEITSKNSKISRDVFKSVPSADAIFMKSILHEWNDEECIQILKRCKEAIPKGGKVIIADVVIDMDSTHPYSKSRLAMDLAMMLHTGGKERTEEDWKKLIDAAGFASCKITKLSALQSVIEAYPH</sequence>
<keyword id="KW-0017">Alkaloid metabolism</keyword>
<keyword id="KW-0489">Methyltransferase</keyword>
<keyword id="KW-0949">S-adenosyl-L-methionine</keyword>
<keyword id="KW-0808">Transferase</keyword>
<reference key="1">
    <citation type="journal article" date="2018" name="Plant J.">
        <title>Heterodimeric O-methyltransferases involved in the biosynthesis of noscapine in opium poppy.</title>
        <authorList>
            <person name="Park M.R."/>
            <person name="Chen X."/>
            <person name="Lang D.E."/>
            <person name="Ng K.K.S."/>
            <person name="Facchini P.J."/>
        </authorList>
    </citation>
    <scope>NUCLEOTIDE SEQUENCE [MRNA]</scope>
    <source>
        <strain>cv. Marianne</strain>
    </source>
</reference>
<accession>A0A2S1WC15</accession>
<name>OMT3B_PAPSO</name>